<dbReference type="EMBL" id="CP000029">
    <property type="protein sequence ID" value="AAW54471.1"/>
    <property type="molecule type" value="Genomic_DNA"/>
</dbReference>
<dbReference type="RefSeq" id="WP_000048060.1">
    <property type="nucleotide sequence ID" value="NC_002976.3"/>
</dbReference>
<dbReference type="SMR" id="Q5HNX1"/>
<dbReference type="STRING" id="176279.SERP1143"/>
<dbReference type="GeneID" id="98345946"/>
<dbReference type="KEGG" id="ser:SERP1143"/>
<dbReference type="eggNOG" id="COG0828">
    <property type="taxonomic scope" value="Bacteria"/>
</dbReference>
<dbReference type="HOGENOM" id="CLU_159258_3_2_9"/>
<dbReference type="Proteomes" id="UP000000531">
    <property type="component" value="Chromosome"/>
</dbReference>
<dbReference type="GO" id="GO:1990904">
    <property type="term" value="C:ribonucleoprotein complex"/>
    <property type="evidence" value="ECO:0007669"/>
    <property type="project" value="UniProtKB-KW"/>
</dbReference>
<dbReference type="GO" id="GO:0005840">
    <property type="term" value="C:ribosome"/>
    <property type="evidence" value="ECO:0007669"/>
    <property type="project" value="UniProtKB-KW"/>
</dbReference>
<dbReference type="GO" id="GO:0003735">
    <property type="term" value="F:structural constituent of ribosome"/>
    <property type="evidence" value="ECO:0007669"/>
    <property type="project" value="InterPro"/>
</dbReference>
<dbReference type="GO" id="GO:0006412">
    <property type="term" value="P:translation"/>
    <property type="evidence" value="ECO:0007669"/>
    <property type="project" value="UniProtKB-UniRule"/>
</dbReference>
<dbReference type="Gene3D" id="1.20.5.1150">
    <property type="entry name" value="Ribosomal protein S8"/>
    <property type="match status" value="1"/>
</dbReference>
<dbReference type="HAMAP" id="MF_00358">
    <property type="entry name" value="Ribosomal_bS21"/>
    <property type="match status" value="1"/>
</dbReference>
<dbReference type="InterPro" id="IPR001911">
    <property type="entry name" value="Ribosomal_bS21"/>
</dbReference>
<dbReference type="InterPro" id="IPR018278">
    <property type="entry name" value="Ribosomal_bS21_CS"/>
</dbReference>
<dbReference type="InterPro" id="IPR038380">
    <property type="entry name" value="Ribosomal_bS21_sf"/>
</dbReference>
<dbReference type="NCBIfam" id="TIGR00030">
    <property type="entry name" value="S21p"/>
    <property type="match status" value="1"/>
</dbReference>
<dbReference type="PANTHER" id="PTHR21109">
    <property type="entry name" value="MITOCHONDRIAL 28S RIBOSOMAL PROTEIN S21"/>
    <property type="match status" value="1"/>
</dbReference>
<dbReference type="PANTHER" id="PTHR21109:SF22">
    <property type="entry name" value="SMALL RIBOSOMAL SUBUNIT PROTEIN BS21"/>
    <property type="match status" value="1"/>
</dbReference>
<dbReference type="Pfam" id="PF01165">
    <property type="entry name" value="Ribosomal_S21"/>
    <property type="match status" value="1"/>
</dbReference>
<dbReference type="PRINTS" id="PR00976">
    <property type="entry name" value="RIBOSOMALS21"/>
</dbReference>
<dbReference type="PROSITE" id="PS01181">
    <property type="entry name" value="RIBOSOMAL_S21"/>
    <property type="match status" value="1"/>
</dbReference>
<comment type="similarity">
    <text evidence="1">Belongs to the bacterial ribosomal protein bS21 family.</text>
</comment>
<keyword id="KW-1185">Reference proteome</keyword>
<keyword id="KW-0687">Ribonucleoprotein</keyword>
<keyword id="KW-0689">Ribosomal protein</keyword>
<gene>
    <name evidence="1" type="primary">rpsU</name>
    <name type="ordered locus">SERP1143</name>
</gene>
<feature type="chain" id="PRO_0000178380" description="Small ribosomal subunit protein bS21">
    <location>
        <begin position="1"/>
        <end position="58"/>
    </location>
</feature>
<evidence type="ECO:0000255" key="1">
    <source>
        <dbReference type="HAMAP-Rule" id="MF_00358"/>
    </source>
</evidence>
<evidence type="ECO:0000305" key="2"/>
<proteinExistence type="inferred from homology"/>
<organism>
    <name type="scientific">Staphylococcus epidermidis (strain ATCC 35984 / DSM 28319 / BCRC 17069 / CCUG 31568 / BM 3577 / RP62A)</name>
    <dbReference type="NCBI Taxonomy" id="176279"/>
    <lineage>
        <taxon>Bacteria</taxon>
        <taxon>Bacillati</taxon>
        <taxon>Bacillota</taxon>
        <taxon>Bacilli</taxon>
        <taxon>Bacillales</taxon>
        <taxon>Staphylococcaceae</taxon>
        <taxon>Staphylococcus</taxon>
    </lineage>
</organism>
<protein>
    <recommendedName>
        <fullName evidence="1">Small ribosomal subunit protein bS21</fullName>
    </recommendedName>
    <alternativeName>
        <fullName evidence="2">30S ribosomal protein S21</fullName>
    </alternativeName>
</protein>
<name>RS21_STAEQ</name>
<sequence>MSKTVVRKNESLEDALRRFKRSVSKSGTIQEVRKREFYEKPSVKRKKKSEAARKRKFK</sequence>
<reference key="1">
    <citation type="journal article" date="2005" name="J. Bacteriol.">
        <title>Insights on evolution of virulence and resistance from the complete genome analysis of an early methicillin-resistant Staphylococcus aureus strain and a biofilm-producing methicillin-resistant Staphylococcus epidermidis strain.</title>
        <authorList>
            <person name="Gill S.R."/>
            <person name="Fouts D.E."/>
            <person name="Archer G.L."/>
            <person name="Mongodin E.F."/>
            <person name="DeBoy R.T."/>
            <person name="Ravel J."/>
            <person name="Paulsen I.T."/>
            <person name="Kolonay J.F."/>
            <person name="Brinkac L.M."/>
            <person name="Beanan M.J."/>
            <person name="Dodson R.J."/>
            <person name="Daugherty S.C."/>
            <person name="Madupu R."/>
            <person name="Angiuoli S.V."/>
            <person name="Durkin A.S."/>
            <person name="Haft D.H."/>
            <person name="Vamathevan J.J."/>
            <person name="Khouri H."/>
            <person name="Utterback T.R."/>
            <person name="Lee C."/>
            <person name="Dimitrov G."/>
            <person name="Jiang L."/>
            <person name="Qin H."/>
            <person name="Weidman J."/>
            <person name="Tran K."/>
            <person name="Kang K.H."/>
            <person name="Hance I.R."/>
            <person name="Nelson K.E."/>
            <person name="Fraser C.M."/>
        </authorList>
    </citation>
    <scope>NUCLEOTIDE SEQUENCE [LARGE SCALE GENOMIC DNA]</scope>
    <source>
        <strain>ATCC 35984 / DSM 28319 / BCRC 17069 / CCUG 31568 / BM 3577 / RP62A</strain>
    </source>
</reference>
<accession>Q5HNX1</accession>